<reference key="1">
    <citation type="journal article" date="2009" name="J. Bacteriol.">
        <title>The genome of Burkholderia cenocepacia J2315, an epidemic pathogen of cystic fibrosis patients.</title>
        <authorList>
            <person name="Holden M.T."/>
            <person name="Seth-Smith H.M."/>
            <person name="Crossman L.C."/>
            <person name="Sebaihia M."/>
            <person name="Bentley S.D."/>
            <person name="Cerdeno-Tarraga A.M."/>
            <person name="Thomson N.R."/>
            <person name="Bason N."/>
            <person name="Quail M.A."/>
            <person name="Sharp S."/>
            <person name="Cherevach I."/>
            <person name="Churcher C."/>
            <person name="Goodhead I."/>
            <person name="Hauser H."/>
            <person name="Holroyd N."/>
            <person name="Mungall K."/>
            <person name="Scott P."/>
            <person name="Walker D."/>
            <person name="White B."/>
            <person name="Rose H."/>
            <person name="Iversen P."/>
            <person name="Mil-Homens D."/>
            <person name="Rocha E.P."/>
            <person name="Fialho A.M."/>
            <person name="Baldwin A."/>
            <person name="Dowson C."/>
            <person name="Barrell B.G."/>
            <person name="Govan J.R."/>
            <person name="Vandamme P."/>
            <person name="Hart C.A."/>
            <person name="Mahenthiralingam E."/>
            <person name="Parkhill J."/>
        </authorList>
    </citation>
    <scope>NUCLEOTIDE SEQUENCE [LARGE SCALE GENOMIC DNA]</scope>
    <source>
        <strain>ATCC BAA-245 / DSM 16553 / LMG 16656 / NCTC 13227 / J2315 / CF5610</strain>
    </source>
</reference>
<keyword id="KW-0210">Decarboxylase</keyword>
<keyword id="KW-0456">Lyase</keyword>
<keyword id="KW-0704">Schiff base</keyword>
<organism>
    <name type="scientific">Burkholderia cenocepacia (strain ATCC BAA-245 / DSM 16553 / LMG 16656 / NCTC 13227 / J2315 / CF5610)</name>
    <name type="common">Burkholderia cepacia (strain J2315)</name>
    <dbReference type="NCBI Taxonomy" id="216591"/>
    <lineage>
        <taxon>Bacteria</taxon>
        <taxon>Pseudomonadati</taxon>
        <taxon>Pseudomonadota</taxon>
        <taxon>Betaproteobacteria</taxon>
        <taxon>Burkholderiales</taxon>
        <taxon>Burkholderiaceae</taxon>
        <taxon>Burkholderia</taxon>
        <taxon>Burkholderia cepacia complex</taxon>
    </lineage>
</organism>
<name>ADC_BURCJ</name>
<sequence>MKPSDVRSKAFAMPLTSPAFPMGPYRFVDREFLIITYRTDPDRLREIVPEPLQVTEPLVHYEFIRMADSTGFGDYTESGQVIPVEYNGQAGGYTLAMYLDDHPPIAGGRELWGFPKKLASPTLHVNTDHILGTLDYGKVRVATGTMGYKHKELDIDEQTKRLAGPNFLLKIIPHVDGTARVCELVRYYMQDIKMKGAWTGPASLELAPHALAPVADLPVLEIVEARHLVADLTLGLGEVVYDYLAQ</sequence>
<feature type="chain" id="PRO_1000129876" description="Acetoacetate decarboxylase">
    <location>
        <begin position="1"/>
        <end position="246"/>
    </location>
</feature>
<feature type="active site" description="Schiff-base intermediate with acetoacetate" evidence="1">
    <location>
        <position position="116"/>
    </location>
</feature>
<evidence type="ECO:0000255" key="1">
    <source>
        <dbReference type="HAMAP-Rule" id="MF_00597"/>
    </source>
</evidence>
<gene>
    <name evidence="1" type="primary">adc</name>
    <name type="ordered locus">BceJ2315_34930</name>
    <name type="ORF">BCAM0023</name>
</gene>
<proteinExistence type="inferred from homology"/>
<comment type="function">
    <text evidence="1">Catalyzes the conversion of acetoacetate to acetone and carbon dioxide.</text>
</comment>
<comment type="catalytic activity">
    <reaction evidence="1">
        <text>acetoacetate + H(+) = acetone + CO2</text>
        <dbReference type="Rhea" id="RHEA:19729"/>
        <dbReference type="ChEBI" id="CHEBI:13705"/>
        <dbReference type="ChEBI" id="CHEBI:15347"/>
        <dbReference type="ChEBI" id="CHEBI:15378"/>
        <dbReference type="ChEBI" id="CHEBI:16526"/>
        <dbReference type="EC" id="4.1.1.4"/>
    </reaction>
</comment>
<comment type="similarity">
    <text evidence="1">Belongs to the ADC family.</text>
</comment>
<accession>B4EG09</accession>
<protein>
    <recommendedName>
        <fullName evidence="1">Acetoacetate decarboxylase</fullName>
        <shortName evidence="1">AAD</shortName>
        <shortName evidence="1">ADC</shortName>
        <ecNumber evidence="1">4.1.1.4</ecNumber>
    </recommendedName>
</protein>
<dbReference type="EC" id="4.1.1.4" evidence="1"/>
<dbReference type="EMBL" id="AM747721">
    <property type="protein sequence ID" value="CAR53878.1"/>
    <property type="molecule type" value="Genomic_DNA"/>
</dbReference>
<dbReference type="RefSeq" id="WP_006485181.1">
    <property type="nucleotide sequence ID" value="NC_011001.1"/>
</dbReference>
<dbReference type="SMR" id="B4EG09"/>
<dbReference type="KEGG" id="bcj:BCAM0023"/>
<dbReference type="eggNOG" id="COG4689">
    <property type="taxonomic scope" value="Bacteria"/>
</dbReference>
<dbReference type="HOGENOM" id="CLU_077089_0_0_4"/>
<dbReference type="BioCyc" id="BCEN216591:G1G1V-3957-MONOMER"/>
<dbReference type="Proteomes" id="UP000001035">
    <property type="component" value="Chromosome 2"/>
</dbReference>
<dbReference type="GO" id="GO:0047602">
    <property type="term" value="F:acetoacetate decarboxylase activity"/>
    <property type="evidence" value="ECO:0007669"/>
    <property type="project" value="UniProtKB-UniRule"/>
</dbReference>
<dbReference type="Gene3D" id="2.40.400.10">
    <property type="entry name" value="Acetoacetate decarboxylase-like"/>
    <property type="match status" value="1"/>
</dbReference>
<dbReference type="HAMAP" id="MF_00597">
    <property type="entry name" value="ADC"/>
    <property type="match status" value="1"/>
</dbReference>
<dbReference type="InterPro" id="IPR010451">
    <property type="entry name" value="Acetoacetate_decarboxylase"/>
</dbReference>
<dbReference type="InterPro" id="IPR023653">
    <property type="entry name" value="Acetoacetate_decarboxylase_bac"/>
</dbReference>
<dbReference type="InterPro" id="IPR023375">
    <property type="entry name" value="ADC_dom_sf"/>
</dbReference>
<dbReference type="NCBIfam" id="NF002614">
    <property type="entry name" value="PRK02265.1"/>
    <property type="match status" value="1"/>
</dbReference>
<dbReference type="Pfam" id="PF06314">
    <property type="entry name" value="ADC"/>
    <property type="match status" value="1"/>
</dbReference>
<dbReference type="SUPFAM" id="SSF160104">
    <property type="entry name" value="Acetoacetate decarboxylase-like"/>
    <property type="match status" value="1"/>
</dbReference>